<name>CR33_RANCA</name>
<sequence length="22" mass="2427">GLWEKIKEKANELVSGIVEGVK</sequence>
<protein>
    <recommendedName>
        <fullName>Caerin-3.3</fullName>
    </recommendedName>
</protein>
<keyword id="KW-0027">Amidation</keyword>
<keyword id="KW-0878">Amphibian defense peptide</keyword>
<keyword id="KW-0044">Antibiotic</keyword>
<keyword id="KW-0929">Antimicrobial</keyword>
<keyword id="KW-0903">Direct protein sequencing</keyword>
<keyword id="KW-0964">Secreted</keyword>
<accession>P56240</accession>
<organism>
    <name type="scientific">Ranoidea caerulea</name>
    <name type="common">Green tree frog</name>
    <name type="synonym">Litoria caerulea</name>
    <dbReference type="NCBI Taxonomy" id="30344"/>
    <lineage>
        <taxon>Eukaryota</taxon>
        <taxon>Metazoa</taxon>
        <taxon>Chordata</taxon>
        <taxon>Craniata</taxon>
        <taxon>Vertebrata</taxon>
        <taxon>Euteleostomi</taxon>
        <taxon>Amphibia</taxon>
        <taxon>Batrachia</taxon>
        <taxon>Anura</taxon>
        <taxon>Neobatrachia</taxon>
        <taxon>Hyloidea</taxon>
        <taxon>Hylidae</taxon>
        <taxon>Pelodryadinae</taxon>
        <taxon>Ranoidea</taxon>
    </lineage>
</organism>
<dbReference type="GO" id="GO:0005576">
    <property type="term" value="C:extracellular region"/>
    <property type="evidence" value="ECO:0007669"/>
    <property type="project" value="UniProtKB-SubCell"/>
</dbReference>
<dbReference type="GO" id="GO:0042742">
    <property type="term" value="P:defense response to bacterium"/>
    <property type="evidence" value="ECO:0007669"/>
    <property type="project" value="UniProtKB-KW"/>
</dbReference>
<reference key="1">
    <citation type="journal article" date="1993" name="J. Chem. Res.">
        <title>Peptides from Australian frogs. The structures of the caerins from Litoria caerula.</title>
        <authorList>
            <person name="Stone D.J.M."/>
            <person name="Waugh R.J."/>
            <person name="Bowie J.H."/>
            <person name="Wallace J.C."/>
            <person name="Tyler M.J."/>
        </authorList>
    </citation>
    <scope>PROTEIN SEQUENCE</scope>
    <scope>AMIDATION AT LYS-22</scope>
    <scope>MASS SPECTROMETRY</scope>
    <source>
        <tissue>Parotoid gland</tissue>
    </source>
</reference>
<evidence type="ECO:0000269" key="1">
    <source ref="1"/>
</evidence>
<evidence type="ECO:0000305" key="2"/>
<feature type="peptide" id="PRO_0000043750" description="Caerin-3.3">
    <location>
        <begin position="1"/>
        <end position="22"/>
    </location>
</feature>
<feature type="modified residue" description="Lysine amide" evidence="1">
    <location>
        <position position="22"/>
    </location>
</feature>
<comment type="function">
    <text>Antibacterial peptide, that adopts an alpha helical conformation which can disrupt bacterial membranes. Each caerin displays a different antimicrobial specificity.</text>
</comment>
<comment type="subcellular location">
    <subcellularLocation>
        <location>Secreted</location>
    </subcellularLocation>
</comment>
<comment type="tissue specificity">
    <text>Expressed by the skin parotoid and/or rostral glands.</text>
</comment>
<comment type="mass spectrometry" mass="2424.0" method="FAB" evidence="1"/>
<comment type="similarity">
    <text evidence="2">Belongs to the frog skin active peptide (FSAP) family. Caerin subfamily.</text>
</comment>
<proteinExistence type="evidence at protein level"/>